<accession>P0CX17</accession>
<accession>D3DLH5</accession>
<accession>P89887</accession>
<proteinExistence type="uncertain"/>
<protein>
    <recommendedName>
        <fullName>Putative uncharacterized protein YLR464W</fullName>
    </recommendedName>
</protein>
<name>YL464_YEAST</name>
<evidence type="ECO:0000305" key="1"/>
<comment type="similarity">
    <text evidence="1">Belongs to the helicase family. Yeast subtelomeric Y' repeat subfamily.</text>
</comment>
<comment type="caution">
    <text evidence="1">Could be the product of a pseudogene. Although strongly related to DNA helicases, it lacks the helicase domains, suggesting that it has no helicase activity.</text>
</comment>
<gene>
    <name type="ordered locus">YLR464W</name>
</gene>
<dbReference type="EMBL" id="U22383">
    <property type="protein sequence ID" value="AAB64726.1"/>
    <property type="molecule type" value="Genomic_DNA"/>
</dbReference>
<dbReference type="EMBL" id="BK006945">
    <property type="protein sequence ID" value="DAA09762.1"/>
    <property type="molecule type" value="Genomic_DNA"/>
</dbReference>
<dbReference type="PIR" id="S70308">
    <property type="entry name" value="S70308"/>
</dbReference>
<dbReference type="RefSeq" id="NP_010836.1">
    <property type="nucleotide sequence ID" value="NM_001180855.1"/>
</dbReference>
<dbReference type="RefSeq" id="NP_013569.1">
    <property type="nucleotide sequence ID" value="NM_001182352.1"/>
</dbReference>
<dbReference type="SMR" id="P0CX17"/>
<dbReference type="BioGRID" id="31721">
    <property type="interactions" value="48"/>
</dbReference>
<dbReference type="BioGRID" id="36655">
    <property type="interactions" value="4"/>
</dbReference>
<dbReference type="FunCoup" id="P0CX17">
    <property type="interactions" value="38"/>
</dbReference>
<dbReference type="EnsemblFungi" id="YEL076C-A_mRNA">
    <property type="protein sequence ID" value="YEL076C-A"/>
    <property type="gene ID" value="YEL076C-A"/>
</dbReference>
<dbReference type="EnsemblFungi" id="YLR464W_mRNA">
    <property type="protein sequence ID" value="YLR464W"/>
    <property type="gene ID" value="YLR464W"/>
</dbReference>
<dbReference type="GeneID" id="851185"/>
<dbReference type="KEGG" id="sce:YEL076C-A"/>
<dbReference type="KEGG" id="sce:YLR464W"/>
<dbReference type="AGR" id="SGD:S000004456"/>
<dbReference type="SGD" id="S000004456">
    <property type="gene designation" value="YLR464W"/>
</dbReference>
<dbReference type="VEuPathDB" id="FungiDB:YEL076C-A"/>
<dbReference type="VEuPathDB" id="FungiDB:YLR464W"/>
<dbReference type="GeneTree" id="ENSGT00940000178469"/>
<dbReference type="HOGENOM" id="CLU_1278507_0_0_1"/>
<dbReference type="InParanoid" id="P0CX17"/>
<dbReference type="OrthoDB" id="4039556at2759"/>
<dbReference type="BioCyc" id="YEAST:G3O-32515-MONOMER"/>
<dbReference type="Proteomes" id="UP000002311">
    <property type="component" value="Chromosome XII"/>
</dbReference>
<dbReference type="RNAct" id="P0CX17">
    <property type="molecule type" value="protein"/>
</dbReference>
<dbReference type="InterPro" id="IPR050978">
    <property type="entry name" value="Y'_ATP-dependent_helicase"/>
</dbReference>
<dbReference type="PANTHER" id="PTHR31583">
    <property type="match status" value="1"/>
</dbReference>
<dbReference type="PANTHER" id="PTHR31583:SF2">
    <property type="match status" value="1"/>
</dbReference>
<keyword id="KW-1185">Reference proteome</keyword>
<reference key="1">
    <citation type="journal article" date="1997" name="Nature">
        <title>The nucleotide sequence of Saccharomyces cerevisiae chromosome XII.</title>
        <authorList>
            <person name="Johnston M."/>
            <person name="Hillier L.W."/>
            <person name="Riles L."/>
            <person name="Albermann K."/>
            <person name="Andre B."/>
            <person name="Ansorge W."/>
            <person name="Benes V."/>
            <person name="Brueckner M."/>
            <person name="Delius H."/>
            <person name="Dubois E."/>
            <person name="Duesterhoeft A."/>
            <person name="Entian K.-D."/>
            <person name="Floeth M."/>
            <person name="Goffeau A."/>
            <person name="Hebling U."/>
            <person name="Heumann K."/>
            <person name="Heuss-Neitzel D."/>
            <person name="Hilbert H."/>
            <person name="Hilger F."/>
            <person name="Kleine K."/>
            <person name="Koetter P."/>
            <person name="Louis E.J."/>
            <person name="Messenguy F."/>
            <person name="Mewes H.-W."/>
            <person name="Miosga T."/>
            <person name="Moestl D."/>
            <person name="Mueller-Auer S."/>
            <person name="Nentwich U."/>
            <person name="Obermaier B."/>
            <person name="Piravandi E."/>
            <person name="Pohl T.M."/>
            <person name="Portetelle D."/>
            <person name="Purnelle B."/>
            <person name="Rechmann S."/>
            <person name="Rieger M."/>
            <person name="Rinke M."/>
            <person name="Rose M."/>
            <person name="Scharfe M."/>
            <person name="Scherens B."/>
            <person name="Scholler P."/>
            <person name="Schwager C."/>
            <person name="Schwarz S."/>
            <person name="Underwood A.P."/>
            <person name="Urrestarazu L.A."/>
            <person name="Vandenbol M."/>
            <person name="Verhasselt P."/>
            <person name="Vierendeels F."/>
            <person name="Voet M."/>
            <person name="Volckaert G."/>
            <person name="Voss H."/>
            <person name="Wambutt R."/>
            <person name="Wedler E."/>
            <person name="Wedler H."/>
            <person name="Zimmermann F.K."/>
            <person name="Zollner A."/>
            <person name="Hani J."/>
            <person name="Hoheisel J.D."/>
        </authorList>
    </citation>
    <scope>NUCLEOTIDE SEQUENCE [LARGE SCALE GENOMIC DNA]</scope>
    <source>
        <strain>ATCC 204508 / S288c</strain>
    </source>
</reference>
<reference key="2">
    <citation type="journal article" date="2014" name="G3 (Bethesda)">
        <title>The reference genome sequence of Saccharomyces cerevisiae: Then and now.</title>
        <authorList>
            <person name="Engel S.R."/>
            <person name="Dietrich F.S."/>
            <person name="Fisk D.G."/>
            <person name="Binkley G."/>
            <person name="Balakrishnan R."/>
            <person name="Costanzo M.C."/>
            <person name="Dwight S.S."/>
            <person name="Hitz B.C."/>
            <person name="Karra K."/>
            <person name="Nash R.S."/>
            <person name="Weng S."/>
            <person name="Wong E.D."/>
            <person name="Lloyd P."/>
            <person name="Skrzypek M.S."/>
            <person name="Miyasato S.R."/>
            <person name="Simison M."/>
            <person name="Cherry J.M."/>
        </authorList>
    </citation>
    <scope>GENOME REANNOTATION</scope>
    <source>
        <strain>ATCC 204508 / S288c</strain>
    </source>
</reference>
<feature type="chain" id="PRO_0000409752" description="Putative uncharacterized protein YLR464W">
    <location>
        <begin position="1"/>
        <end position="216"/>
    </location>
</feature>
<organism>
    <name type="scientific">Saccharomyces cerevisiae (strain ATCC 204508 / S288c)</name>
    <name type="common">Baker's yeast</name>
    <dbReference type="NCBI Taxonomy" id="559292"/>
    <lineage>
        <taxon>Eukaryota</taxon>
        <taxon>Fungi</taxon>
        <taxon>Dikarya</taxon>
        <taxon>Ascomycota</taxon>
        <taxon>Saccharomycotina</taxon>
        <taxon>Saccharomycetes</taxon>
        <taxon>Saccharomycetales</taxon>
        <taxon>Saccharomycetaceae</taxon>
        <taxon>Saccharomyces</taxon>
    </lineage>
</organism>
<sequence>MQASLPGEKKVDTERLKRDLCPRKPIEIKYFSQICNDMMNKKDRLGDILHIILRACALNFGAGPRGGAGDEEDRSITNEEPIIPSVDEHGLKVCKLRSPNTPRRLRKTLDAVKALLVSSCACTARDLDIFDDNNGVAMWKWIKILYHEVAQETTLKDSYRITLVPSSDGISDTLTVIQSFSYSLLPVLSATYTSMIQQDASNCTLITTRTVHRSLD</sequence>